<sequence length="690" mass="72642">MSAAQVSSSRRQSCYLCDLPRMPWAMIWDFTEPVCRGCVNYEGADRIEFVIDTARQLKRSHSFQDGRSPGPQGPGSGASNKQHPAVQAALTAKDTAQLNHLDGATKAAAASGLERYGLTTDRGRFEYTLAARLPNGLNGFPKPGEDGPPELNRQSPNSRGRTGHGLIPQLVPGQLSVPPNLIPQTLLNGPPPGTPGGAPHVLGRGPASSSGLGVPPTASSSGDPKRPGSVSSTDQERELKEKQRNSEALSELTESLRNRAEEWAGKPKAVRDTLLTLTASTPFDVRFKKDHNLLGRVFAFDAASKPGLLDYELKLFVEYPSGSLNVFSSASGVAKQMYQDCMKDFGRGLSSGFKYLEYEKKHGSGDWRLLGDLLPESVRFFKEMVGADMLPQPYLDPGCPMLPSALVNLPRALAAAAAASSSAGSSGQARSGVRKRKASPEPDSADGQMWLTGQPDGIKQLSMAPAGGTPSSSSAAYGVPSAPPPPLGPGHPQRTTPPESAPPNGPSPMAALQSVTDTLGTAHSPKDGQAGGLPPVHSTTSSARRNSSSPVSPASVTGQRRLNSRNGAGSAELSLQVAPTGGAPHPGMDQVHPQNIPDSPMANSGPLCCTICHERLEDTHFVQCPSVPSHKFCFPCSRDSIKAQGATGEVYCPSGEKCPLVGSNVPWAFMQGEIATILAGDVKVKKERDP</sequence>
<comment type="subcellular location">
    <subcellularLocation>
        <location evidence="1">Nucleus</location>
    </subcellularLocation>
</comment>
<comment type="similarity">
    <text evidence="4">Belongs to the IRF2BP family.</text>
</comment>
<dbReference type="EMBL" id="BC081137">
    <property type="protein sequence ID" value="AAH81137.1"/>
    <property type="molecule type" value="mRNA"/>
</dbReference>
<dbReference type="RefSeq" id="NP_001087721.1">
    <property type="nucleotide sequence ID" value="NM_001094252.1"/>
</dbReference>
<dbReference type="SMR" id="Q66IY8"/>
<dbReference type="DNASU" id="447545"/>
<dbReference type="GeneID" id="447545"/>
<dbReference type="KEGG" id="xla:447545"/>
<dbReference type="AGR" id="Xenbase:XB-GENE-968645"/>
<dbReference type="CTD" id="447545"/>
<dbReference type="OMA" id="GAQMNVP"/>
<dbReference type="OrthoDB" id="10065080at2759"/>
<dbReference type="Proteomes" id="UP000186698">
    <property type="component" value="Chromosome 8L"/>
</dbReference>
<dbReference type="Bgee" id="447545">
    <property type="expression patterns" value="Expressed in blastula and 19 other cell types or tissues"/>
</dbReference>
<dbReference type="GO" id="GO:0005634">
    <property type="term" value="C:nucleus"/>
    <property type="evidence" value="ECO:0000318"/>
    <property type="project" value="GO_Central"/>
</dbReference>
<dbReference type="GO" id="GO:0003714">
    <property type="term" value="F:transcription corepressor activity"/>
    <property type="evidence" value="ECO:0000318"/>
    <property type="project" value="GO_Central"/>
</dbReference>
<dbReference type="GO" id="GO:0008270">
    <property type="term" value="F:zinc ion binding"/>
    <property type="evidence" value="ECO:0007669"/>
    <property type="project" value="UniProtKB-KW"/>
</dbReference>
<dbReference type="GO" id="GO:0006357">
    <property type="term" value="P:regulation of transcription by RNA polymerase II"/>
    <property type="evidence" value="ECO:0000318"/>
    <property type="project" value="GO_Central"/>
</dbReference>
<dbReference type="CDD" id="cd16717">
    <property type="entry name" value="vRING-HC_IRF2BPL"/>
    <property type="match status" value="1"/>
</dbReference>
<dbReference type="FunFam" id="1.10.10.1580:FF:000001">
    <property type="entry name" value="interferon regulatory factor 2-binding protein 2"/>
    <property type="match status" value="1"/>
</dbReference>
<dbReference type="Gene3D" id="1.10.10.1580">
    <property type="entry name" value="Interferon regulatory factor 2-binding protein"/>
    <property type="match status" value="1"/>
</dbReference>
<dbReference type="InterPro" id="IPR044882">
    <property type="entry name" value="I2BP1/2_C3HC4-RING_sf"/>
</dbReference>
<dbReference type="InterPro" id="IPR022750">
    <property type="entry name" value="Interferon_reg_fac2-bd1_2_Znf"/>
</dbReference>
<dbReference type="PANTHER" id="PTHR10816:SF14">
    <property type="entry name" value="E3 UBIQUITIN-PROTEIN LIGASE IRF2BPL-RELATED"/>
    <property type="match status" value="1"/>
</dbReference>
<dbReference type="PANTHER" id="PTHR10816">
    <property type="entry name" value="MYELIN TRANSCRIPTION FACTOR 1-RELATED"/>
    <property type="match status" value="1"/>
</dbReference>
<dbReference type="Pfam" id="PF11261">
    <property type="entry name" value="IRF-2BP1_2"/>
    <property type="match status" value="1"/>
</dbReference>
<dbReference type="Pfam" id="PF25457">
    <property type="entry name" value="IRF-2BP1_2_M"/>
    <property type="match status" value="1"/>
</dbReference>
<dbReference type="Pfam" id="PF25454">
    <property type="entry name" value="zf-C3HC4_IRF-2BP1_2"/>
    <property type="match status" value="1"/>
</dbReference>
<dbReference type="SUPFAM" id="SSF57850">
    <property type="entry name" value="RING/U-box"/>
    <property type="match status" value="1"/>
</dbReference>
<gene>
    <name type="primary">irf2bpl-a</name>
    <name type="synonym">eap1-a</name>
</gene>
<reference key="1">
    <citation type="submission" date="2004-08" db="EMBL/GenBank/DDBJ databases">
        <authorList>
            <consortium name="NIH - Xenopus Gene Collection (XGC) project"/>
        </authorList>
    </citation>
    <scope>NUCLEOTIDE SEQUENCE [LARGE SCALE MRNA]</scope>
    <source>
        <tissue>Oocyte</tissue>
    </source>
</reference>
<name>I2BLA_XENLA</name>
<organism>
    <name type="scientific">Xenopus laevis</name>
    <name type="common">African clawed frog</name>
    <dbReference type="NCBI Taxonomy" id="8355"/>
    <lineage>
        <taxon>Eukaryota</taxon>
        <taxon>Metazoa</taxon>
        <taxon>Chordata</taxon>
        <taxon>Craniata</taxon>
        <taxon>Vertebrata</taxon>
        <taxon>Euteleostomi</taxon>
        <taxon>Amphibia</taxon>
        <taxon>Batrachia</taxon>
        <taxon>Anura</taxon>
        <taxon>Pipoidea</taxon>
        <taxon>Pipidae</taxon>
        <taxon>Xenopodinae</taxon>
        <taxon>Xenopus</taxon>
        <taxon>Xenopus</taxon>
    </lineage>
</organism>
<evidence type="ECO:0000250" key="1"/>
<evidence type="ECO:0000255" key="2"/>
<evidence type="ECO:0000256" key="3">
    <source>
        <dbReference type="SAM" id="MobiDB-lite"/>
    </source>
</evidence>
<evidence type="ECO:0000305" key="4"/>
<accession>Q66IY8</accession>
<proteinExistence type="evidence at transcript level"/>
<keyword id="KW-0175">Coiled coil</keyword>
<keyword id="KW-0479">Metal-binding</keyword>
<keyword id="KW-0539">Nucleus</keyword>
<keyword id="KW-1185">Reference proteome</keyword>
<keyword id="KW-0862">Zinc</keyword>
<keyword id="KW-0863">Zinc-finger</keyword>
<feature type="chain" id="PRO_0000328732" description="Interferon regulatory factor 2-binding protein-like A">
    <location>
        <begin position="1"/>
        <end position="690"/>
    </location>
</feature>
<feature type="zinc finger region" description="RING-type; degenerate">
    <location>
        <begin position="609"/>
        <end position="656"/>
    </location>
</feature>
<feature type="region of interest" description="Disordered" evidence="3">
    <location>
        <begin position="59"/>
        <end position="87"/>
    </location>
</feature>
<feature type="region of interest" description="Disordered" evidence="3">
    <location>
        <begin position="134"/>
        <end position="251"/>
    </location>
</feature>
<feature type="region of interest" description="Disordered" evidence="3">
    <location>
        <begin position="419"/>
        <end position="599"/>
    </location>
</feature>
<feature type="coiled-coil region" evidence="2">
    <location>
        <begin position="231"/>
        <end position="263"/>
    </location>
</feature>
<feature type="compositionally biased region" description="Polar residues" evidence="3">
    <location>
        <begin position="207"/>
        <end position="222"/>
    </location>
</feature>
<feature type="compositionally biased region" description="Basic and acidic residues" evidence="3">
    <location>
        <begin position="234"/>
        <end position="245"/>
    </location>
</feature>
<feature type="compositionally biased region" description="Low complexity" evidence="3">
    <location>
        <begin position="419"/>
        <end position="431"/>
    </location>
</feature>
<feature type="compositionally biased region" description="Low complexity" evidence="3">
    <location>
        <begin position="464"/>
        <end position="480"/>
    </location>
</feature>
<feature type="compositionally biased region" description="Low complexity" evidence="3">
    <location>
        <begin position="538"/>
        <end position="556"/>
    </location>
</feature>
<feature type="compositionally biased region" description="Polar residues" evidence="3">
    <location>
        <begin position="557"/>
        <end position="567"/>
    </location>
</feature>
<protein>
    <recommendedName>
        <fullName>Interferon regulatory factor 2-binding protein-like A</fullName>
    </recommendedName>
    <alternativeName>
        <fullName>Enhanced at puberty protein 1 homolog A</fullName>
    </alternativeName>
</protein>